<organism>
    <name type="scientific">Tachypleus tridentatus</name>
    <name type="common">Japanese horseshoe crab</name>
    <dbReference type="NCBI Taxonomy" id="6853"/>
    <lineage>
        <taxon>Eukaryota</taxon>
        <taxon>Metazoa</taxon>
        <taxon>Ecdysozoa</taxon>
        <taxon>Arthropoda</taxon>
        <taxon>Chelicerata</taxon>
        <taxon>Merostomata</taxon>
        <taxon>Xiphosura</taxon>
        <taxon>Limulidae</taxon>
        <taxon>Tachypleus</taxon>
    </lineage>
</organism>
<sequence length="87" mass="10203">TIKEKQASILALFEHLTSVPKQHIPEKERDNRLHDVGHLSRGKLFSLFHREHLEEATHLYEILHAAKNFDDFLLLCKQARDFVNEGM</sequence>
<proteinExistence type="evidence at protein level"/>
<name>HCYA_TACTR</name>
<protein>
    <recommendedName>
        <fullName>Hemocyanin alpha chain</fullName>
    </recommendedName>
</protein>
<keyword id="KW-0186">Copper</keyword>
<keyword id="KW-0903">Direct protein sequencing</keyword>
<keyword id="KW-0561">Oxygen transport</keyword>
<keyword id="KW-0964">Secreted</keyword>
<keyword id="KW-0813">Transport</keyword>
<reference key="1">
    <citation type="journal article" date="1981" name="Biochim. Biophys. Acta">
        <title>The amino acid sequence of the amino-terminal cyanogen bromide fragment of Tachypleus tridentatus hemocyanin alpha chain.</title>
        <authorList>
            <person name="Nemoto T."/>
            <person name="Takagi T."/>
        </authorList>
    </citation>
    <scope>PROTEIN SEQUENCE</scope>
</reference>
<feature type="chain" id="PRO_0000204299" description="Hemocyanin alpha chain">
    <location>
        <begin position="1"/>
        <end position="87" status="greater than"/>
    </location>
</feature>
<feature type="non-terminal residue">
    <location>
        <position position="87"/>
    </location>
</feature>
<dbReference type="PIR" id="A02567">
    <property type="entry name" value="A02567"/>
</dbReference>
<dbReference type="SMR" id="P02243"/>
<dbReference type="GO" id="GO:0005576">
    <property type="term" value="C:extracellular region"/>
    <property type="evidence" value="ECO:0007669"/>
    <property type="project" value="UniProtKB-SubCell"/>
</dbReference>
<dbReference type="GO" id="GO:0005344">
    <property type="term" value="F:oxygen carrier activity"/>
    <property type="evidence" value="ECO:0007669"/>
    <property type="project" value="UniProtKB-KW"/>
</dbReference>
<dbReference type="Gene3D" id="1.20.1370.10">
    <property type="entry name" value="Hemocyanin, N-terminal domain"/>
    <property type="match status" value="1"/>
</dbReference>
<dbReference type="InterPro" id="IPR005204">
    <property type="entry name" value="Hemocyanin_N"/>
</dbReference>
<dbReference type="InterPro" id="IPR036697">
    <property type="entry name" value="Hemocyanin_N_sf"/>
</dbReference>
<dbReference type="Pfam" id="PF03722">
    <property type="entry name" value="Hemocyanin_N"/>
    <property type="match status" value="1"/>
</dbReference>
<dbReference type="SUPFAM" id="SSF48050">
    <property type="entry name" value="Hemocyanin, N-terminal domain"/>
    <property type="match status" value="1"/>
</dbReference>
<accession>P02243</accession>
<comment type="function">
    <text>Hemocyanins are copper-containing oxygen carriers occurring freely dissolved in the hemolymph of many mollusks and arthropods.</text>
</comment>
<comment type="subunit">
    <text>Polymer that contains six different types of chains (alpha, beta, gamma, delta, epsilon, and zeta).</text>
</comment>
<comment type="subcellular location">
    <subcellularLocation>
        <location>Secreted</location>
        <location>Extracellular space</location>
    </subcellularLocation>
</comment>
<comment type="tissue specificity">
    <text>Hemolymph.</text>
</comment>
<comment type="similarity">
    <text evidence="1">Belongs to the tyrosinase family. Hemocyanin subfamily.</text>
</comment>
<evidence type="ECO:0000305" key="1"/>